<accession>B4JDZ5</accession>
<name>PDE6D_DROGR</name>
<organism>
    <name type="scientific">Drosophila grimshawi</name>
    <name type="common">Hawaiian fruit fly</name>
    <name type="synonym">Idiomyia grimshawi</name>
    <dbReference type="NCBI Taxonomy" id="7222"/>
    <lineage>
        <taxon>Eukaryota</taxon>
        <taxon>Metazoa</taxon>
        <taxon>Ecdysozoa</taxon>
        <taxon>Arthropoda</taxon>
        <taxon>Hexapoda</taxon>
        <taxon>Insecta</taxon>
        <taxon>Pterygota</taxon>
        <taxon>Neoptera</taxon>
        <taxon>Endopterygota</taxon>
        <taxon>Diptera</taxon>
        <taxon>Brachycera</taxon>
        <taxon>Muscomorpha</taxon>
        <taxon>Ephydroidea</taxon>
        <taxon>Drosophilidae</taxon>
        <taxon>Drosophila</taxon>
        <taxon>Hawaiian Drosophila</taxon>
    </lineage>
</organism>
<sequence length="151" mass="17360">MGSDDLSTGDKIQKGFQINYMILRDADTGKVIWQENKDFSAPDLEHEARVPVKILDMRAVSREINFSTIEAMENFRLDQKVLFKGRIMEEWFFEMGFVGANTTNTWQSTIEAAPESQMMPAKVLNGNVTIQTSFYDNETLITKSVVRLYYI</sequence>
<comment type="subunit">
    <text evidence="1">Interacts with Pde6.</text>
</comment>
<comment type="subcellular location">
    <subcellularLocation>
        <location evidence="1">Nucleus</location>
    </subcellularLocation>
    <subcellularLocation>
        <location evidence="1">Cytoplasm</location>
    </subcellularLocation>
</comment>
<comment type="similarity">
    <text evidence="2">Belongs to the PDE6D/unc-119 family.</text>
</comment>
<dbReference type="EMBL" id="CH916368">
    <property type="protein sequence ID" value="EDW03515.1"/>
    <property type="molecule type" value="Genomic_DNA"/>
</dbReference>
<dbReference type="SMR" id="B4JDZ5"/>
<dbReference type="FunCoup" id="B4JDZ5">
    <property type="interactions" value="1515"/>
</dbReference>
<dbReference type="STRING" id="7222.B4JDZ5"/>
<dbReference type="EnsemblMetazoa" id="FBtr0145876">
    <property type="protein sequence ID" value="FBpp0144368"/>
    <property type="gene ID" value="FBgn0117943"/>
</dbReference>
<dbReference type="EnsemblMetazoa" id="XM_001988612.3">
    <property type="protein sequence ID" value="XP_001988648.1"/>
    <property type="gene ID" value="LOC6561432"/>
</dbReference>
<dbReference type="GeneID" id="6561432"/>
<dbReference type="KEGG" id="dgr:6561432"/>
<dbReference type="eggNOG" id="KOG4038">
    <property type="taxonomic scope" value="Eukaryota"/>
</dbReference>
<dbReference type="HOGENOM" id="CLU_119682_0_0_1"/>
<dbReference type="InParanoid" id="B4JDZ5"/>
<dbReference type="OMA" id="STNTWQN"/>
<dbReference type="OrthoDB" id="10248777at2759"/>
<dbReference type="PhylomeDB" id="B4JDZ5"/>
<dbReference type="Proteomes" id="UP000001070">
    <property type="component" value="Unassembled WGS sequence"/>
</dbReference>
<dbReference type="GO" id="GO:0005737">
    <property type="term" value="C:cytoplasm"/>
    <property type="evidence" value="ECO:0000250"/>
    <property type="project" value="UniProtKB"/>
</dbReference>
<dbReference type="GO" id="GO:0005634">
    <property type="term" value="C:nucleus"/>
    <property type="evidence" value="ECO:0000250"/>
    <property type="project" value="UniProtKB"/>
</dbReference>
<dbReference type="GO" id="GO:0050953">
    <property type="term" value="P:sensory perception of light stimulus"/>
    <property type="evidence" value="ECO:0007669"/>
    <property type="project" value="InterPro"/>
</dbReference>
<dbReference type="FunFam" id="2.70.50.40:FF:000002">
    <property type="entry name" value="Retinal rod rhodopsin-sensitive cGMP 3',5'-cyclic phosphodiesterase subunit delta"/>
    <property type="match status" value="1"/>
</dbReference>
<dbReference type="Gene3D" id="2.70.50.40">
    <property type="entry name" value="GMP phosphodiesterase, delta subunit"/>
    <property type="match status" value="1"/>
</dbReference>
<dbReference type="InterPro" id="IPR014756">
    <property type="entry name" value="Ig_E-set"/>
</dbReference>
<dbReference type="InterPro" id="IPR008015">
    <property type="entry name" value="PDED_dom"/>
</dbReference>
<dbReference type="InterPro" id="IPR037036">
    <property type="entry name" value="PDED_dom_sf"/>
</dbReference>
<dbReference type="InterPro" id="IPR017287">
    <property type="entry name" value="Rhodop-sen_GMP-Pdiesterase_dsu"/>
</dbReference>
<dbReference type="PANTHER" id="PTHR12976">
    <property type="entry name" value="RETINAL ROD RHODOPSIN-SENSITIVE CGMP 3',5'-CYCLIC PHOSPHODIESTERASE DELTA-SUBUNIT"/>
    <property type="match status" value="1"/>
</dbReference>
<dbReference type="PANTHER" id="PTHR12976:SF0">
    <property type="entry name" value="RETINAL ROD RHODOPSIN-SENSITIVE CGMP 3',5'-CYCLIC PHOSPHODIESTERASE SUBUNIT DELTA"/>
    <property type="match status" value="1"/>
</dbReference>
<dbReference type="Pfam" id="PF05351">
    <property type="entry name" value="GMP_PDE_delta"/>
    <property type="match status" value="1"/>
</dbReference>
<dbReference type="PIRSF" id="PIRSF037825">
    <property type="entry name" value="GMP-Pdiesterase_delta"/>
    <property type="match status" value="1"/>
</dbReference>
<dbReference type="SUPFAM" id="SSF81296">
    <property type="entry name" value="E set domains"/>
    <property type="match status" value="1"/>
</dbReference>
<protein>
    <recommendedName>
        <fullName>Probable cGMP 3',5'-cyclic phosphodiesterase subunit delta</fullName>
    </recommendedName>
</protein>
<keyword id="KW-0140">cGMP</keyword>
<keyword id="KW-0963">Cytoplasm</keyword>
<keyword id="KW-0539">Nucleus</keyword>
<keyword id="KW-1185">Reference proteome</keyword>
<proteinExistence type="inferred from homology"/>
<gene>
    <name evidence="1" type="primary">PrBP</name>
    <name type="ORF">GH10462</name>
</gene>
<reference evidence="3" key="1">
    <citation type="journal article" date="2007" name="Nature">
        <title>Evolution of genes and genomes on the Drosophila phylogeny.</title>
        <authorList>
            <consortium name="Drosophila 12 genomes consortium"/>
        </authorList>
    </citation>
    <scope>NUCLEOTIDE SEQUENCE [LARGE SCALE GENOMIC DNA]</scope>
    <source>
        <strain evidence="3">Tucson 15287-2541.00</strain>
    </source>
</reference>
<evidence type="ECO:0000250" key="1">
    <source>
        <dbReference type="UniProtKB" id="Q9VLJ0"/>
    </source>
</evidence>
<evidence type="ECO:0000255" key="2"/>
<evidence type="ECO:0000312" key="3">
    <source>
        <dbReference type="EMBL" id="EDW03515.1"/>
    </source>
</evidence>
<feature type="chain" id="PRO_0000363675" description="Probable cGMP 3',5'-cyclic phosphodiesterase subunit delta">
    <location>
        <begin position="1"/>
        <end position="151"/>
    </location>
</feature>